<evidence type="ECO:0000250" key="1"/>
<evidence type="ECO:0000255" key="2"/>
<evidence type="ECO:0000269" key="3">
    <source>
    </source>
</evidence>
<evidence type="ECO:0000269" key="4">
    <source>
    </source>
</evidence>
<evidence type="ECO:0000269" key="5">
    <source>
    </source>
</evidence>
<evidence type="ECO:0000305" key="6"/>
<evidence type="ECO:0000305" key="7">
    <source>
    </source>
</evidence>
<dbReference type="EMBL" id="M96262">
    <property type="status" value="NOT_ANNOTATED_CDS"/>
    <property type="molecule type" value="Genomic_RNA"/>
</dbReference>
<dbReference type="SMR" id="P0C6Y6"/>
<dbReference type="TCDB" id="1.A.116.1.1">
    <property type="family name" value="the pore-forming porcine reproductive and respiratory syndrome virus viroporin (prrsv) family"/>
</dbReference>
<dbReference type="iPTMnet" id="P0C6Y6"/>
<dbReference type="Proteomes" id="UP000006687">
    <property type="component" value="Segment"/>
</dbReference>
<dbReference type="GO" id="GO:0005576">
    <property type="term" value="C:extracellular region"/>
    <property type="evidence" value="ECO:0007669"/>
    <property type="project" value="UniProtKB-SubCell"/>
</dbReference>
<dbReference type="GO" id="GO:0044167">
    <property type="term" value="C:host cell endoplasmic reticulum membrane"/>
    <property type="evidence" value="ECO:0007669"/>
    <property type="project" value="UniProtKB-SubCell"/>
</dbReference>
<dbReference type="GO" id="GO:0044178">
    <property type="term" value="C:host cell Golgi membrane"/>
    <property type="evidence" value="ECO:0007669"/>
    <property type="project" value="UniProtKB-SubCell"/>
</dbReference>
<dbReference type="GO" id="GO:0016020">
    <property type="term" value="C:membrane"/>
    <property type="evidence" value="ECO:0007669"/>
    <property type="project" value="UniProtKB-KW"/>
</dbReference>
<dbReference type="GO" id="GO:0019031">
    <property type="term" value="C:viral envelope"/>
    <property type="evidence" value="ECO:0007669"/>
    <property type="project" value="UniProtKB-KW"/>
</dbReference>
<dbReference type="GO" id="GO:0055036">
    <property type="term" value="C:virion membrane"/>
    <property type="evidence" value="ECO:0007669"/>
    <property type="project" value="UniProtKB-SubCell"/>
</dbReference>
<dbReference type="GO" id="GO:0015267">
    <property type="term" value="F:channel activity"/>
    <property type="evidence" value="ECO:0007669"/>
    <property type="project" value="UniProtKB-KW"/>
</dbReference>
<dbReference type="GO" id="GO:0034220">
    <property type="term" value="P:monoatomic ion transmembrane transport"/>
    <property type="evidence" value="ECO:0007669"/>
    <property type="project" value="UniProtKB-KW"/>
</dbReference>
<dbReference type="InterPro" id="IPR009775">
    <property type="entry name" value="GP2b"/>
</dbReference>
<dbReference type="Pfam" id="PF07069">
    <property type="entry name" value="PRRSV_2b"/>
    <property type="match status" value="1"/>
</dbReference>
<reference key="1">
    <citation type="journal article" date="1993" name="Virology">
        <title>Lelystad virus, the causative agent of porcine epidemic abortion and respiratory syndrome (PEARS), is related to LDV and EAV.</title>
        <authorList>
            <person name="Meulenberg J.J.M."/>
            <person name="Hulst M.M."/>
            <person name="de Meijer E.J."/>
            <person name="Moonen P.L.J.M."/>
            <person name="den Besten A."/>
            <person name="de Kluyver E.P."/>
            <person name="Wensvoort G."/>
            <person name="Moormann R.J.M."/>
        </authorList>
    </citation>
    <scope>NUCLEOTIDE SEQUENCE [GENOMIC RNA]</scope>
</reference>
<reference key="2">
    <citation type="journal article" date="1993" name="Virology">
        <title>Molecular characterization of porcine reproductive and respiratory syndrome virus, a member of the arterivirus group.</title>
        <authorList>
            <person name="Conzelmann K.K."/>
            <person name="Visser N."/>
            <person name="van Woensel P."/>
            <person name="Thiel H.J."/>
        </authorList>
    </citation>
    <scope>NUCLEOTIDE SEQUENCE [GENOMIC RNA]</scope>
    <source>
        <strain>Isolate Boxmeer 10</strain>
    </source>
</reference>
<reference key="3">
    <citation type="journal article" date="2005" name="J. Virol.">
        <title>Envelope protein requirements for the assembly of infectious virions of porcine reproductive and respiratory syndrome virus.</title>
        <authorList>
            <person name="Wissink E.H."/>
            <person name="Kroese M.V."/>
            <person name="van Wijk H.A."/>
            <person name="Rijsewijk F.A."/>
            <person name="Meulenberg J.J."/>
            <person name="Rottier P.J."/>
        </authorList>
    </citation>
    <scope>SUBCELLULAR LOCATION</scope>
    <scope>SUBUNIT</scope>
</reference>
<reference key="4">
    <citation type="journal article" date="2006" name="Virology">
        <title>The small envelope protein of porcine reproductive and respiratory syndrome virus possesses ion channel protein-like properties.</title>
        <authorList>
            <person name="Lee C."/>
            <person name="Yoo D."/>
        </authorList>
    </citation>
    <scope>CHARACTERIZATION</scope>
    <scope>FUNCTION</scope>
    <source>
        <strain>PA8</strain>
    </source>
</reference>
<reference key="5">
    <citation type="journal article" date="2010" name="Virus Res.">
        <title>Myristoylation of the small envelope protein of porcine reproductive and respiratory syndrome virus is non-essential for virus infectivity but promotes its growth.</title>
        <authorList>
            <person name="Du Y."/>
            <person name="Zuckermann F.A."/>
            <person name="Yoo D."/>
        </authorList>
    </citation>
    <scope>MYRISTOYLATION AT GLY-2</scope>
</reference>
<keyword id="KW-0325">Glycoprotein</keyword>
<keyword id="KW-1038">Host endoplasmic reticulum</keyword>
<keyword id="KW-1040">Host Golgi apparatus</keyword>
<keyword id="KW-1043">Host membrane</keyword>
<keyword id="KW-0407">Ion channel</keyword>
<keyword id="KW-0406">Ion transport</keyword>
<keyword id="KW-0449">Lipoprotein</keyword>
<keyword id="KW-0472">Membrane</keyword>
<keyword id="KW-0519">Myristate</keyword>
<keyword id="KW-1185">Reference proteome</keyword>
<keyword id="KW-0964">Secreted</keyword>
<keyword id="KW-0812">Transmembrane</keyword>
<keyword id="KW-1133">Transmembrane helix</keyword>
<keyword id="KW-0813">Transport</keyword>
<keyword id="KW-0261">Viral envelope protein</keyword>
<keyword id="KW-1182">Viral ion channel</keyword>
<keyword id="KW-0946">Virion</keyword>
<organismHost>
    <name type="scientific">Sus scrofa</name>
    <name type="common">Pig</name>
    <dbReference type="NCBI Taxonomy" id="9823"/>
</organismHost>
<name>E_PRRSL</name>
<proteinExistence type="evidence at protein level"/>
<accession>P0C6Y6</accession>
<gene>
    <name type="primary">GP2b</name>
    <name type="ORF">2b</name>
</gene>
<feature type="initiator methionine" description="Removed; by host" evidence="5">
    <location>
        <position position="1"/>
    </location>
</feature>
<feature type="chain" id="PRO_0000351500" description="Envelope small membrane protein">
    <location>
        <begin position="2"/>
        <end position="70"/>
    </location>
</feature>
<feature type="topological domain" description="Virion surface" evidence="2">
    <location>
        <begin position="2"/>
        <end position="25"/>
    </location>
</feature>
<feature type="transmembrane region" description="Helical" evidence="2">
    <location>
        <begin position="26"/>
        <end position="46"/>
    </location>
</feature>
<feature type="topological domain" description="Intravirion" evidence="2">
    <location>
        <begin position="47"/>
        <end position="70"/>
    </location>
</feature>
<feature type="region of interest" description="Endoplasmic reticulum retention signal" evidence="2">
    <location>
        <begin position="2"/>
        <end position="15"/>
    </location>
</feature>
<feature type="lipid moiety-binding region" description="N-myristoyl glycine; by host" evidence="5">
    <location>
        <position position="2"/>
    </location>
</feature>
<comment type="function">
    <text evidence="4">Minor envelope protein. May function as a viroporin in the virion envelope that facilitates uncoating of the virus in order to release the genomic RNA into the cytoplasm for subsequent replication.</text>
</comment>
<comment type="subunit">
    <text evidence="7">Homooligomer. Associates with itself into higher-order structures, including dimers, trimers and tetramers. Associates with the GP2a-GP3-GP4 complex (Probable).</text>
</comment>
<comment type="subcellular location">
    <subcellularLocation>
        <location evidence="3">Virion membrane</location>
        <topology evidence="3">Single-pass type I membrane protein</topology>
    </subcellularLocation>
    <subcellularLocation>
        <location evidence="3">Host endoplasmic reticulum membrane</location>
        <topology evidence="3">Single-pass type I membrane protein</topology>
    </subcellularLocation>
    <subcellularLocation>
        <location evidence="3">Host Golgi apparatus membrane</location>
        <topology evidence="3">Single-pass type I membrane protein</topology>
    </subcellularLocation>
    <subcellularLocation>
        <location evidence="3">Secreted</location>
    </subcellularLocation>
</comment>
<comment type="PTM">
    <text evidence="5">Myristoylated.</text>
</comment>
<comment type="PTM">
    <text evidence="1">Not glycosylated.</text>
</comment>
<comment type="similarity">
    <text evidence="6">Belongs to the arteriviridae E protein family.</text>
</comment>
<sequence>MGSLWSKISQLFVDAFTEFLVSVVDIAIFLAILFGFTVAGWLLVFLLRVVCSALLRSRSAIHSPELSKVL</sequence>
<protein>
    <recommendedName>
        <fullName>Envelope small membrane protein</fullName>
        <shortName>Protein E</shortName>
    </recommendedName>
    <alternativeName>
        <fullName>Glycoprotein 2b</fullName>
        <shortName>Protein GP2b</shortName>
    </alternativeName>
    <alternativeName>
        <fullName>Gs</fullName>
    </alternativeName>
</protein>
<organism>
    <name type="scientific">Porcine reproductive and respiratory syndrome virus (strain Lelystad)</name>
    <name type="common">PRRSV</name>
    <dbReference type="NCBI Taxonomy" id="11049"/>
    <lineage>
        <taxon>Viruses</taxon>
        <taxon>Riboviria</taxon>
        <taxon>Orthornavirae</taxon>
        <taxon>Pisuviricota</taxon>
        <taxon>Pisoniviricetes</taxon>
        <taxon>Nidovirales</taxon>
        <taxon>Arnidovirineae</taxon>
        <taxon>Arteriviridae</taxon>
        <taxon>Variarterivirinae</taxon>
        <taxon>Betaarterivirus</taxon>
        <taxon>Eurpobartevirus</taxon>
        <taxon>Betaarterivirus suid 1</taxon>
    </lineage>
</organism>